<protein>
    <recommendedName>
        <fullName evidence="1">L-threonine 3-dehydrogenase</fullName>
        <shortName evidence="1">TDH</shortName>
        <ecNumber evidence="1">1.1.1.103</ecNumber>
    </recommendedName>
</protein>
<gene>
    <name evidence="1" type="primary">tdh</name>
    <name type="ordered locus">AHA_4235</name>
</gene>
<keyword id="KW-0963">Cytoplasm</keyword>
<keyword id="KW-0479">Metal-binding</keyword>
<keyword id="KW-0520">NAD</keyword>
<keyword id="KW-0560">Oxidoreductase</keyword>
<keyword id="KW-1185">Reference proteome</keyword>
<keyword id="KW-0862">Zinc</keyword>
<evidence type="ECO:0000255" key="1">
    <source>
        <dbReference type="HAMAP-Rule" id="MF_00627"/>
    </source>
</evidence>
<dbReference type="EC" id="1.1.1.103" evidence="1"/>
<dbReference type="EMBL" id="CP000462">
    <property type="protein sequence ID" value="ABK36533.1"/>
    <property type="molecule type" value="Genomic_DNA"/>
</dbReference>
<dbReference type="RefSeq" id="WP_011707888.1">
    <property type="nucleotide sequence ID" value="NC_008570.1"/>
</dbReference>
<dbReference type="RefSeq" id="YP_858657.1">
    <property type="nucleotide sequence ID" value="NC_008570.1"/>
</dbReference>
<dbReference type="SMR" id="A0KQV6"/>
<dbReference type="STRING" id="380703.AHA_4235"/>
<dbReference type="EnsemblBacteria" id="ABK36533">
    <property type="protein sequence ID" value="ABK36533"/>
    <property type="gene ID" value="AHA_4235"/>
</dbReference>
<dbReference type="GeneID" id="4488004"/>
<dbReference type="KEGG" id="aha:AHA_4235"/>
<dbReference type="PATRIC" id="fig|380703.7.peg.4189"/>
<dbReference type="eggNOG" id="COG1063">
    <property type="taxonomic scope" value="Bacteria"/>
</dbReference>
<dbReference type="HOGENOM" id="CLU_026673_11_0_6"/>
<dbReference type="OrthoDB" id="9773078at2"/>
<dbReference type="UniPathway" id="UPA00046">
    <property type="reaction ID" value="UER00505"/>
</dbReference>
<dbReference type="Proteomes" id="UP000000756">
    <property type="component" value="Chromosome"/>
</dbReference>
<dbReference type="GO" id="GO:0005737">
    <property type="term" value="C:cytoplasm"/>
    <property type="evidence" value="ECO:0007669"/>
    <property type="project" value="UniProtKB-SubCell"/>
</dbReference>
<dbReference type="GO" id="GO:0008743">
    <property type="term" value="F:L-threonine 3-dehydrogenase activity"/>
    <property type="evidence" value="ECO:0007669"/>
    <property type="project" value="UniProtKB-UniRule"/>
</dbReference>
<dbReference type="GO" id="GO:0008270">
    <property type="term" value="F:zinc ion binding"/>
    <property type="evidence" value="ECO:0007669"/>
    <property type="project" value="UniProtKB-UniRule"/>
</dbReference>
<dbReference type="GO" id="GO:0019518">
    <property type="term" value="P:L-threonine catabolic process to glycine"/>
    <property type="evidence" value="ECO:0007669"/>
    <property type="project" value="UniProtKB-UniPathway"/>
</dbReference>
<dbReference type="Gene3D" id="3.90.180.10">
    <property type="entry name" value="Medium-chain alcohol dehydrogenases, catalytic domain"/>
    <property type="match status" value="1"/>
</dbReference>
<dbReference type="Gene3D" id="3.40.50.720">
    <property type="entry name" value="NAD(P)-binding Rossmann-like Domain"/>
    <property type="match status" value="1"/>
</dbReference>
<dbReference type="HAMAP" id="MF_00627">
    <property type="entry name" value="Thr_dehydrog"/>
    <property type="match status" value="1"/>
</dbReference>
<dbReference type="InterPro" id="IPR013149">
    <property type="entry name" value="ADH-like_C"/>
</dbReference>
<dbReference type="InterPro" id="IPR013154">
    <property type="entry name" value="ADH-like_N"/>
</dbReference>
<dbReference type="InterPro" id="IPR002328">
    <property type="entry name" value="ADH_Zn_CS"/>
</dbReference>
<dbReference type="InterPro" id="IPR011032">
    <property type="entry name" value="GroES-like_sf"/>
</dbReference>
<dbReference type="InterPro" id="IPR004627">
    <property type="entry name" value="L-Threonine_3-DHase"/>
</dbReference>
<dbReference type="InterPro" id="IPR036291">
    <property type="entry name" value="NAD(P)-bd_dom_sf"/>
</dbReference>
<dbReference type="InterPro" id="IPR020843">
    <property type="entry name" value="PKS_ER"/>
</dbReference>
<dbReference type="InterPro" id="IPR050129">
    <property type="entry name" value="Zn_alcohol_dh"/>
</dbReference>
<dbReference type="NCBIfam" id="NF003808">
    <property type="entry name" value="PRK05396.1"/>
    <property type="match status" value="1"/>
</dbReference>
<dbReference type="NCBIfam" id="TIGR00692">
    <property type="entry name" value="tdh"/>
    <property type="match status" value="1"/>
</dbReference>
<dbReference type="PANTHER" id="PTHR43401">
    <property type="entry name" value="L-THREONINE 3-DEHYDROGENASE"/>
    <property type="match status" value="1"/>
</dbReference>
<dbReference type="PANTHER" id="PTHR43401:SF2">
    <property type="entry name" value="L-THREONINE 3-DEHYDROGENASE"/>
    <property type="match status" value="1"/>
</dbReference>
<dbReference type="Pfam" id="PF08240">
    <property type="entry name" value="ADH_N"/>
    <property type="match status" value="1"/>
</dbReference>
<dbReference type="Pfam" id="PF00107">
    <property type="entry name" value="ADH_zinc_N"/>
    <property type="match status" value="1"/>
</dbReference>
<dbReference type="SMART" id="SM00829">
    <property type="entry name" value="PKS_ER"/>
    <property type="match status" value="1"/>
</dbReference>
<dbReference type="SUPFAM" id="SSF50129">
    <property type="entry name" value="GroES-like"/>
    <property type="match status" value="1"/>
</dbReference>
<dbReference type="SUPFAM" id="SSF51735">
    <property type="entry name" value="NAD(P)-binding Rossmann-fold domains"/>
    <property type="match status" value="1"/>
</dbReference>
<dbReference type="PROSITE" id="PS00059">
    <property type="entry name" value="ADH_ZINC"/>
    <property type="match status" value="1"/>
</dbReference>
<feature type="chain" id="PRO_1000051612" description="L-threonine 3-dehydrogenase">
    <location>
        <begin position="1"/>
        <end position="342"/>
    </location>
</feature>
<feature type="active site" description="Charge relay system" evidence="1">
    <location>
        <position position="40"/>
    </location>
</feature>
<feature type="active site" description="Charge relay system" evidence="1">
    <location>
        <position position="43"/>
    </location>
</feature>
<feature type="binding site" evidence="1">
    <location>
        <position position="38"/>
    </location>
    <ligand>
        <name>Zn(2+)</name>
        <dbReference type="ChEBI" id="CHEBI:29105"/>
        <label>1</label>
        <note>catalytic</note>
    </ligand>
</feature>
<feature type="binding site" evidence="1">
    <location>
        <position position="63"/>
    </location>
    <ligand>
        <name>Zn(2+)</name>
        <dbReference type="ChEBI" id="CHEBI:29105"/>
        <label>1</label>
        <note>catalytic</note>
    </ligand>
</feature>
<feature type="binding site" evidence="1">
    <location>
        <position position="64"/>
    </location>
    <ligand>
        <name>Zn(2+)</name>
        <dbReference type="ChEBI" id="CHEBI:29105"/>
        <label>1</label>
        <note>catalytic</note>
    </ligand>
</feature>
<feature type="binding site" evidence="1">
    <location>
        <position position="93"/>
    </location>
    <ligand>
        <name>Zn(2+)</name>
        <dbReference type="ChEBI" id="CHEBI:29105"/>
        <label>2</label>
    </ligand>
</feature>
<feature type="binding site" evidence="1">
    <location>
        <position position="96"/>
    </location>
    <ligand>
        <name>Zn(2+)</name>
        <dbReference type="ChEBI" id="CHEBI:29105"/>
        <label>2</label>
    </ligand>
</feature>
<feature type="binding site" evidence="1">
    <location>
        <position position="99"/>
    </location>
    <ligand>
        <name>Zn(2+)</name>
        <dbReference type="ChEBI" id="CHEBI:29105"/>
        <label>2</label>
    </ligand>
</feature>
<feature type="binding site" evidence="1">
    <location>
        <position position="107"/>
    </location>
    <ligand>
        <name>Zn(2+)</name>
        <dbReference type="ChEBI" id="CHEBI:29105"/>
        <label>2</label>
    </ligand>
</feature>
<feature type="binding site" evidence="1">
    <location>
        <position position="175"/>
    </location>
    <ligand>
        <name>NAD(+)</name>
        <dbReference type="ChEBI" id="CHEBI:57540"/>
    </ligand>
</feature>
<feature type="binding site" evidence="1">
    <location>
        <position position="195"/>
    </location>
    <ligand>
        <name>NAD(+)</name>
        <dbReference type="ChEBI" id="CHEBI:57540"/>
    </ligand>
</feature>
<feature type="binding site" evidence="1">
    <location>
        <position position="200"/>
    </location>
    <ligand>
        <name>NAD(+)</name>
        <dbReference type="ChEBI" id="CHEBI:57540"/>
    </ligand>
</feature>
<feature type="binding site" evidence="1">
    <location>
        <begin position="262"/>
        <end position="264"/>
    </location>
    <ligand>
        <name>NAD(+)</name>
        <dbReference type="ChEBI" id="CHEBI:57540"/>
    </ligand>
</feature>
<feature type="binding site" evidence="1">
    <location>
        <begin position="286"/>
        <end position="287"/>
    </location>
    <ligand>
        <name>NAD(+)</name>
        <dbReference type="ChEBI" id="CHEBI:57540"/>
    </ligand>
</feature>
<feature type="site" description="Important for catalytic activity for the proton relay mechanism but does not participate directly in the coordination of zinc atom" evidence="1">
    <location>
        <position position="148"/>
    </location>
</feature>
<proteinExistence type="inferred from homology"/>
<reference key="1">
    <citation type="journal article" date="2006" name="J. Bacteriol.">
        <title>Genome sequence of Aeromonas hydrophila ATCC 7966T: jack of all trades.</title>
        <authorList>
            <person name="Seshadri R."/>
            <person name="Joseph S.W."/>
            <person name="Chopra A.K."/>
            <person name="Sha J."/>
            <person name="Shaw J."/>
            <person name="Graf J."/>
            <person name="Haft D.H."/>
            <person name="Wu M."/>
            <person name="Ren Q."/>
            <person name="Rosovitz M.J."/>
            <person name="Madupu R."/>
            <person name="Tallon L."/>
            <person name="Kim M."/>
            <person name="Jin S."/>
            <person name="Vuong H."/>
            <person name="Stine O.C."/>
            <person name="Ali A."/>
            <person name="Horneman A.J."/>
            <person name="Heidelberg J.F."/>
        </authorList>
    </citation>
    <scope>NUCLEOTIDE SEQUENCE [LARGE SCALE GENOMIC DNA]</scope>
    <source>
        <strain>ATCC 7966 / DSM 30187 / BCRC 13018 / CCUG 14551 / JCM 1027 / KCTC 2358 / NCIMB 9240 / NCTC 8049</strain>
    </source>
</reference>
<organism>
    <name type="scientific">Aeromonas hydrophila subsp. hydrophila (strain ATCC 7966 / DSM 30187 / BCRC 13018 / CCUG 14551 / JCM 1027 / KCTC 2358 / NCIMB 9240 / NCTC 8049)</name>
    <dbReference type="NCBI Taxonomy" id="380703"/>
    <lineage>
        <taxon>Bacteria</taxon>
        <taxon>Pseudomonadati</taxon>
        <taxon>Pseudomonadota</taxon>
        <taxon>Gammaproteobacteria</taxon>
        <taxon>Aeromonadales</taxon>
        <taxon>Aeromonadaceae</taxon>
        <taxon>Aeromonas</taxon>
    </lineage>
</organism>
<comment type="function">
    <text evidence="1">Catalyzes the NAD(+)-dependent oxidation of L-threonine to 2-amino-3-ketobutyrate.</text>
</comment>
<comment type="catalytic activity">
    <reaction evidence="1">
        <text>L-threonine + NAD(+) = (2S)-2-amino-3-oxobutanoate + NADH + H(+)</text>
        <dbReference type="Rhea" id="RHEA:13161"/>
        <dbReference type="ChEBI" id="CHEBI:15378"/>
        <dbReference type="ChEBI" id="CHEBI:57540"/>
        <dbReference type="ChEBI" id="CHEBI:57926"/>
        <dbReference type="ChEBI" id="CHEBI:57945"/>
        <dbReference type="ChEBI" id="CHEBI:78948"/>
        <dbReference type="EC" id="1.1.1.103"/>
    </reaction>
</comment>
<comment type="cofactor">
    <cofactor evidence="1">
        <name>Zn(2+)</name>
        <dbReference type="ChEBI" id="CHEBI:29105"/>
    </cofactor>
    <text evidence="1">Binds 2 Zn(2+) ions per subunit.</text>
</comment>
<comment type="pathway">
    <text evidence="1">Amino-acid degradation; L-threonine degradation via oxydo-reductase pathway; glycine from L-threonine: step 1/2.</text>
</comment>
<comment type="subunit">
    <text evidence="1">Homotetramer.</text>
</comment>
<comment type="subcellular location">
    <subcellularLocation>
        <location evidence="1">Cytoplasm</location>
    </subcellularLocation>
</comment>
<comment type="similarity">
    <text evidence="1">Belongs to the zinc-containing alcohol dehydrogenase family.</text>
</comment>
<sequence>MKALSKLHKEVGIWMTDVPAPELGHNDLLIKIRKTAICGTDIHIYNWDEWSQKTIPVPMVVGHEYVGEVVAIGQEVRGFAVGDRVSGEGHITCGHCRNCRAGRTHLCRNTIGVGVNRPGAFAEYLVIPAFNAFKLPDNVPDELAAIFDPFGNAVHTALSFDLVGEDVLITGAGPIGIMAAAVCRHVGARHVVITDVNEYRLELARKMGATRAVNVTKEQLSGVMSELGMTEGFDVGLEMSGVPSAFQDMIDKMNHGGKIAMLGIPPATMAIDWGKVIFKGLFIKGIYGREMFETWYKMASLIQSGLDLSPIITHRFHIDDFQQGFDAMRSGQSGKVILSWDK</sequence>
<name>TDH_AERHH</name>
<accession>A0KQV6</accession>